<keyword id="KW-0030">Aminoacyl-tRNA synthetase</keyword>
<keyword id="KW-0067">ATP-binding</keyword>
<keyword id="KW-0963">Cytoplasm</keyword>
<keyword id="KW-0436">Ligase</keyword>
<keyword id="KW-0479">Metal-binding</keyword>
<keyword id="KW-0547">Nucleotide-binding</keyword>
<keyword id="KW-0648">Protein biosynthesis</keyword>
<keyword id="KW-1185">Reference proteome</keyword>
<keyword id="KW-0862">Zinc</keyword>
<name>SYI_STRAW</name>
<gene>
    <name evidence="1" type="primary">ileS</name>
    <name type="ordered locus">SAV_6130</name>
</gene>
<reference key="1">
    <citation type="journal article" date="2001" name="Proc. Natl. Acad. Sci. U.S.A.">
        <title>Genome sequence of an industrial microorganism Streptomyces avermitilis: deducing the ability of producing secondary metabolites.</title>
        <authorList>
            <person name="Omura S."/>
            <person name="Ikeda H."/>
            <person name="Ishikawa J."/>
            <person name="Hanamoto A."/>
            <person name="Takahashi C."/>
            <person name="Shinose M."/>
            <person name="Takahashi Y."/>
            <person name="Horikawa H."/>
            <person name="Nakazawa H."/>
            <person name="Osonoe T."/>
            <person name="Kikuchi H."/>
            <person name="Shiba T."/>
            <person name="Sakaki Y."/>
            <person name="Hattori M."/>
        </authorList>
    </citation>
    <scope>NUCLEOTIDE SEQUENCE [LARGE SCALE GENOMIC DNA]</scope>
    <source>
        <strain>ATCC 31267 / DSM 46492 / JCM 5070 / NBRC 14893 / NCIMB 12804 / NRRL 8165 / MA-4680</strain>
    </source>
</reference>
<reference key="2">
    <citation type="journal article" date="2003" name="Nat. Biotechnol.">
        <title>Complete genome sequence and comparative analysis of the industrial microorganism Streptomyces avermitilis.</title>
        <authorList>
            <person name="Ikeda H."/>
            <person name="Ishikawa J."/>
            <person name="Hanamoto A."/>
            <person name="Shinose M."/>
            <person name="Kikuchi H."/>
            <person name="Shiba T."/>
            <person name="Sakaki Y."/>
            <person name="Hattori M."/>
            <person name="Omura S."/>
        </authorList>
    </citation>
    <scope>NUCLEOTIDE SEQUENCE [LARGE SCALE GENOMIC DNA]</scope>
    <source>
        <strain>ATCC 31267 / DSM 46492 / JCM 5070 / NBRC 14893 / NCIMB 12804 / NRRL 8165 / MA-4680</strain>
    </source>
</reference>
<comment type="function">
    <text evidence="1">Catalyzes the attachment of isoleucine to tRNA(Ile). As IleRS can inadvertently accommodate and process structurally similar amino acids such as valine, to avoid such errors it has two additional distinct tRNA(Ile)-dependent editing activities. One activity is designated as 'pretransfer' editing and involves the hydrolysis of activated Val-AMP. The other activity is designated 'posttransfer' editing and involves deacylation of mischarged Val-tRNA(Ile).</text>
</comment>
<comment type="catalytic activity">
    <reaction evidence="1">
        <text>tRNA(Ile) + L-isoleucine + ATP = L-isoleucyl-tRNA(Ile) + AMP + diphosphate</text>
        <dbReference type="Rhea" id="RHEA:11060"/>
        <dbReference type="Rhea" id="RHEA-COMP:9666"/>
        <dbReference type="Rhea" id="RHEA-COMP:9695"/>
        <dbReference type="ChEBI" id="CHEBI:30616"/>
        <dbReference type="ChEBI" id="CHEBI:33019"/>
        <dbReference type="ChEBI" id="CHEBI:58045"/>
        <dbReference type="ChEBI" id="CHEBI:78442"/>
        <dbReference type="ChEBI" id="CHEBI:78528"/>
        <dbReference type="ChEBI" id="CHEBI:456215"/>
        <dbReference type="EC" id="6.1.1.5"/>
    </reaction>
</comment>
<comment type="cofactor">
    <cofactor evidence="1">
        <name>Zn(2+)</name>
        <dbReference type="ChEBI" id="CHEBI:29105"/>
    </cofactor>
</comment>
<comment type="subunit">
    <text evidence="1">Monomer.</text>
</comment>
<comment type="subcellular location">
    <subcellularLocation>
        <location evidence="1">Cytoplasm</location>
    </subcellularLocation>
</comment>
<comment type="domain">
    <text evidence="1">IleRS has two distinct active sites: one for aminoacylation and one for editing. The misactivated valine is translocated from the active site to the editing site, which sterically excludes the correctly activated isoleucine. The single editing site contains two valyl binding pockets, one specific for each substrate (Val-AMP or Val-tRNA(Ile)).</text>
</comment>
<comment type="similarity">
    <text evidence="1">Belongs to the class-I aminoacyl-tRNA synthetase family. IleS type 2 subfamily.</text>
</comment>
<dbReference type="EC" id="6.1.1.5" evidence="1"/>
<dbReference type="EMBL" id="BA000030">
    <property type="protein sequence ID" value="BAC73841.1"/>
    <property type="molecule type" value="Genomic_DNA"/>
</dbReference>
<dbReference type="RefSeq" id="WP_010987531.1">
    <property type="nucleotide sequence ID" value="NZ_JZJK01000089.1"/>
</dbReference>
<dbReference type="SMR" id="Q82AC9"/>
<dbReference type="GeneID" id="41543207"/>
<dbReference type="KEGG" id="sma:SAVERM_6130"/>
<dbReference type="eggNOG" id="COG0060">
    <property type="taxonomic scope" value="Bacteria"/>
</dbReference>
<dbReference type="HOGENOM" id="CLU_001493_1_1_11"/>
<dbReference type="OrthoDB" id="9810365at2"/>
<dbReference type="Proteomes" id="UP000000428">
    <property type="component" value="Chromosome"/>
</dbReference>
<dbReference type="GO" id="GO:0005737">
    <property type="term" value="C:cytoplasm"/>
    <property type="evidence" value="ECO:0007669"/>
    <property type="project" value="UniProtKB-SubCell"/>
</dbReference>
<dbReference type="GO" id="GO:0002161">
    <property type="term" value="F:aminoacyl-tRNA deacylase activity"/>
    <property type="evidence" value="ECO:0007669"/>
    <property type="project" value="InterPro"/>
</dbReference>
<dbReference type="GO" id="GO:0005524">
    <property type="term" value="F:ATP binding"/>
    <property type="evidence" value="ECO:0007669"/>
    <property type="project" value="UniProtKB-UniRule"/>
</dbReference>
<dbReference type="GO" id="GO:0004822">
    <property type="term" value="F:isoleucine-tRNA ligase activity"/>
    <property type="evidence" value="ECO:0007669"/>
    <property type="project" value="UniProtKB-UniRule"/>
</dbReference>
<dbReference type="GO" id="GO:0000049">
    <property type="term" value="F:tRNA binding"/>
    <property type="evidence" value="ECO:0007669"/>
    <property type="project" value="InterPro"/>
</dbReference>
<dbReference type="GO" id="GO:0008270">
    <property type="term" value="F:zinc ion binding"/>
    <property type="evidence" value="ECO:0007669"/>
    <property type="project" value="UniProtKB-UniRule"/>
</dbReference>
<dbReference type="GO" id="GO:0006428">
    <property type="term" value="P:isoleucyl-tRNA aminoacylation"/>
    <property type="evidence" value="ECO:0007669"/>
    <property type="project" value="UniProtKB-UniRule"/>
</dbReference>
<dbReference type="CDD" id="cd07961">
    <property type="entry name" value="Anticodon_Ia_Ile_ABEc"/>
    <property type="match status" value="1"/>
</dbReference>
<dbReference type="CDD" id="cd00818">
    <property type="entry name" value="IleRS_core"/>
    <property type="match status" value="1"/>
</dbReference>
<dbReference type="FunFam" id="1.10.730.10:FF:000021">
    <property type="entry name" value="Isoleucine--tRNA ligase"/>
    <property type="match status" value="1"/>
</dbReference>
<dbReference type="FunFam" id="3.40.50.620:FF:000063">
    <property type="entry name" value="Isoleucine--tRNA ligase"/>
    <property type="match status" value="1"/>
</dbReference>
<dbReference type="FunFam" id="3.40.50.620:FF:000075">
    <property type="entry name" value="Isoleucine--tRNA ligase"/>
    <property type="match status" value="1"/>
</dbReference>
<dbReference type="FunFam" id="3.90.740.10:FF:000016">
    <property type="entry name" value="Isoleucine--tRNA ligase"/>
    <property type="match status" value="1"/>
</dbReference>
<dbReference type="Gene3D" id="3.40.50.620">
    <property type="entry name" value="HUPs"/>
    <property type="match status" value="2"/>
</dbReference>
<dbReference type="Gene3D" id="1.10.730.10">
    <property type="entry name" value="Isoleucyl-tRNA Synthetase, Domain 1"/>
    <property type="match status" value="1"/>
</dbReference>
<dbReference type="Gene3D" id="3.90.740.10">
    <property type="entry name" value="Valyl/Leucyl/Isoleucyl-tRNA synthetase, editing domain"/>
    <property type="match status" value="1"/>
</dbReference>
<dbReference type="HAMAP" id="MF_02003">
    <property type="entry name" value="Ile_tRNA_synth_type2"/>
    <property type="match status" value="1"/>
</dbReference>
<dbReference type="InterPro" id="IPR002300">
    <property type="entry name" value="aa-tRNA-synth_Ia"/>
</dbReference>
<dbReference type="InterPro" id="IPR033709">
    <property type="entry name" value="Anticodon_Ile_ABEc"/>
</dbReference>
<dbReference type="InterPro" id="IPR002301">
    <property type="entry name" value="Ile-tRNA-ligase"/>
</dbReference>
<dbReference type="InterPro" id="IPR023586">
    <property type="entry name" value="Ile-tRNA-ligase_type2"/>
</dbReference>
<dbReference type="InterPro" id="IPR013155">
    <property type="entry name" value="M/V/L/I-tRNA-synth_anticd-bd"/>
</dbReference>
<dbReference type="InterPro" id="IPR014729">
    <property type="entry name" value="Rossmann-like_a/b/a_fold"/>
</dbReference>
<dbReference type="InterPro" id="IPR009080">
    <property type="entry name" value="tRNAsynth_Ia_anticodon-bd"/>
</dbReference>
<dbReference type="InterPro" id="IPR009008">
    <property type="entry name" value="Val/Leu/Ile-tRNA-synth_edit"/>
</dbReference>
<dbReference type="NCBIfam" id="TIGR00392">
    <property type="entry name" value="ileS"/>
    <property type="match status" value="1"/>
</dbReference>
<dbReference type="PANTHER" id="PTHR42780:SF1">
    <property type="entry name" value="ISOLEUCINE--TRNA LIGASE, CYTOPLASMIC"/>
    <property type="match status" value="1"/>
</dbReference>
<dbReference type="PANTHER" id="PTHR42780">
    <property type="entry name" value="SOLEUCYL-TRNA SYNTHETASE"/>
    <property type="match status" value="1"/>
</dbReference>
<dbReference type="Pfam" id="PF08264">
    <property type="entry name" value="Anticodon_1"/>
    <property type="match status" value="1"/>
</dbReference>
<dbReference type="Pfam" id="PF19302">
    <property type="entry name" value="DUF5915"/>
    <property type="match status" value="1"/>
</dbReference>
<dbReference type="Pfam" id="PF00133">
    <property type="entry name" value="tRNA-synt_1"/>
    <property type="match status" value="1"/>
</dbReference>
<dbReference type="PRINTS" id="PR00984">
    <property type="entry name" value="TRNASYNTHILE"/>
</dbReference>
<dbReference type="SUPFAM" id="SSF47323">
    <property type="entry name" value="Anticodon-binding domain of a subclass of class I aminoacyl-tRNA synthetases"/>
    <property type="match status" value="1"/>
</dbReference>
<dbReference type="SUPFAM" id="SSF52374">
    <property type="entry name" value="Nucleotidylyl transferase"/>
    <property type="match status" value="1"/>
</dbReference>
<dbReference type="SUPFAM" id="SSF50677">
    <property type="entry name" value="ValRS/IleRS/LeuRS editing domain"/>
    <property type="match status" value="1"/>
</dbReference>
<feature type="chain" id="PRO_0000098563" description="Isoleucine--tRNA ligase">
    <location>
        <begin position="1"/>
        <end position="1047"/>
    </location>
</feature>
<feature type="short sequence motif" description="'HIGH' region">
    <location>
        <begin position="52"/>
        <end position="62"/>
    </location>
</feature>
<feature type="short sequence motif" description="'KMSKS' region">
    <location>
        <begin position="600"/>
        <end position="604"/>
    </location>
</feature>
<feature type="binding site" evidence="1">
    <location>
        <position position="603"/>
    </location>
    <ligand>
        <name>ATP</name>
        <dbReference type="ChEBI" id="CHEBI:30616"/>
    </ligand>
</feature>
<protein>
    <recommendedName>
        <fullName evidence="1">Isoleucine--tRNA ligase</fullName>
        <ecNumber evidence="1">6.1.1.5</ecNumber>
    </recommendedName>
    <alternativeName>
        <fullName evidence="1">Isoleucyl-tRNA synthetase</fullName>
        <shortName evidence="1">IleRS</shortName>
    </alternativeName>
</protein>
<accession>Q82AC9</accession>
<sequence length="1047" mass="117130">MKPPQYRQVPAQVDLPALEHAVLDFWREQKIFAKSLEQSEGRPEWVFYEGPPTANGMPGAHHIEARVFKDVFPRFRTMRGYHVARKAGWDCHGLPVELAVEKELGFSGKQDIEAYGIAEFNAKCRESVTRHTDAFEELTSRMGYWTDLNDPYRTMDPEYIESVWWSLKEIFNKGLLVQDYRVAPWCPQDETGLSDHELAQGYETIVDPSVYVRFPLTSGPLAGRAALLVWTTTPWTLVSNTAVAAHPDVTYVVATNGEEKLVVAEPLVEKALGEGWETTGETFTGAEMERWTYQRPFELVEFPAPAHYVVNAEYVTTEDGTGLVHQSPAFGEDDLKVCREYGLPVVNPVRTNGTFEEDVPLVGGVFFKKADEKLTEDLQNRGLLFKHIPYEHSYPHCWRCHTALLYYAQPSWYIRTTAVKDRLLQENEKTNWFPESVKHGRFGDWLNNNVDWALSRSRFWGTPLPLWTCEEGHLTCVGSRAELSELTGTDQSNLDPHRPFIDAVTFACPQDGCGRTATRVPEVIDAWYDSGSMPFAQWGYPYKNKELFESRYPAQFISEAIDQTRGWFYTLMAVGTLVFDKSSYENVVCLGHILAEDGRKMSKHLGNILQPIPLMDQHGADAVRWFMAAGGSPWAARRVGHGTIQEVVRKTLLTYWNTVAFQALYARTSGWAPSEADPAPADRPVLDRWLLSELHALTDQVTQALESYDTQRAGKLLSAFVDDLSNWYVRRSRRRFWQGDKAALRTLHEVVETVTRLMAPLTPFITERVWQDLVFPVTPGAPESVHLASWPEADLSAIDPELSKQMVLVRRLVELGRATRAESGVKTRQPLSRALVAVAGFETLDRELHAQITEELNVTSLAALSEVGGSLVDTTAKANFRALGKRFGKGVQAVAKAVAGADAAALSLALREGTASVEVDGETVTLAPDEVIITETPREGWSVASDSGATVALDLEITEELRQAGLARDAIRLIQEARKNSGLDVADRIALRWTSTDPEVIAALSEHSELIADEVLATDFAQGEADDTYGEPFTDESLSLTFRLRKA</sequence>
<proteinExistence type="inferred from homology"/>
<organism>
    <name type="scientific">Streptomyces avermitilis (strain ATCC 31267 / DSM 46492 / JCM 5070 / NBRC 14893 / NCIMB 12804 / NRRL 8165 / MA-4680)</name>
    <dbReference type="NCBI Taxonomy" id="227882"/>
    <lineage>
        <taxon>Bacteria</taxon>
        <taxon>Bacillati</taxon>
        <taxon>Actinomycetota</taxon>
        <taxon>Actinomycetes</taxon>
        <taxon>Kitasatosporales</taxon>
        <taxon>Streptomycetaceae</taxon>
        <taxon>Streptomyces</taxon>
    </lineage>
</organism>
<evidence type="ECO:0000255" key="1">
    <source>
        <dbReference type="HAMAP-Rule" id="MF_02003"/>
    </source>
</evidence>